<keyword id="KW-0027">Amidation</keyword>
<keyword id="KW-0165">Cleavage on pair of basic residues</keyword>
<keyword id="KW-0372">Hormone</keyword>
<keyword id="KW-0527">Neuropeptide</keyword>
<keyword id="KW-1185">Reference proteome</keyword>
<keyword id="KW-0964">Secreted</keyword>
<keyword id="KW-0732">Signal</keyword>
<keyword id="KW-0765">Sulfation</keyword>
<protein>
    <recommendedName>
        <fullName evidence="5">Drosulfakinins</fullName>
    </recommendedName>
    <component>
        <recommendedName>
            <fullName evidence="5">Drosulfakinin-0</fullName>
            <shortName evidence="5">DSK-0</shortName>
        </recommendedName>
    </component>
    <component>
        <recommendedName>
            <fullName evidence="5">Drosulfakinin-1</fullName>
        </recommendedName>
        <alternativeName>
            <fullName evidence="5">Drosulfakinin I</fullName>
            <shortName evidence="5">DSK-I</shortName>
        </alternativeName>
    </component>
    <component>
        <recommendedName>
            <fullName evidence="5">Drosulfakinin-2</fullName>
        </recommendedName>
        <alternativeName>
            <fullName evidence="5">Drosulfakinin II</fullName>
            <shortName evidence="5">DSK-II</shortName>
        </alternativeName>
    </component>
</protein>
<evidence type="ECO:0000250" key="1">
    <source>
        <dbReference type="UniProtKB" id="P09040"/>
    </source>
</evidence>
<evidence type="ECO:0000255" key="2"/>
<evidence type="ECO:0000256" key="3">
    <source>
        <dbReference type="SAM" id="MobiDB-lite"/>
    </source>
</evidence>
<evidence type="ECO:0000269" key="4">
    <source>
    </source>
</evidence>
<evidence type="ECO:0000303" key="5">
    <source>
    </source>
</evidence>
<evidence type="ECO:0000305" key="6"/>
<evidence type="ECO:0000312" key="7">
    <source>
        <dbReference type="EMBL" id="ACC99372.1"/>
    </source>
</evidence>
<feature type="signal peptide" evidence="2">
    <location>
        <begin position="1"/>
        <end position="33"/>
    </location>
</feature>
<feature type="propeptide" id="PRO_0000351175" evidence="4">
    <location>
        <begin position="34"/>
        <end position="73"/>
    </location>
</feature>
<feature type="peptide" id="PRO_0000351176" description="Drosulfakinin-0" evidence="2 5">
    <location>
        <begin position="76"/>
        <end position="82"/>
    </location>
</feature>
<feature type="propeptide" id="PRO_0000351177" evidence="4">
    <location>
        <begin position="86"/>
        <end position="111"/>
    </location>
</feature>
<feature type="peptide" id="PRO_0000351178" description="Drosulfakinin-1" evidence="2 5">
    <location>
        <begin position="114"/>
        <end position="122"/>
    </location>
</feature>
<feature type="peptide" id="PRO_0000351179" description="Drosulfakinin-2" evidence="1">
    <location>
        <begin position="126"/>
        <end position="139"/>
    </location>
</feature>
<feature type="region of interest" description="Disordered" evidence="3">
    <location>
        <begin position="51"/>
        <end position="72"/>
    </location>
</feature>
<feature type="modified residue" description="Phenylalanine amide" evidence="2 5">
    <location>
        <position position="82"/>
    </location>
</feature>
<feature type="modified residue" description="Sulfotyrosine" evidence="2 5">
    <location>
        <position position="117"/>
    </location>
</feature>
<feature type="modified residue" description="Phenylalanine amide" evidence="2 5">
    <location>
        <position position="122"/>
    </location>
</feature>
<feature type="modified residue" description="Sulfotyrosine" evidence="1">
    <location>
        <position position="134"/>
    </location>
</feature>
<feature type="modified residue" description="Phenylalanine amide" evidence="1">
    <location>
        <position position="139"/>
    </location>
</feature>
<proteinExistence type="evidence at protein level"/>
<comment type="function">
    <text evidence="1">Drosulfakinin-0 (DSK 0) plays diverse biological roles including regulating gut muscle contraction in adults but not in larvae.</text>
</comment>
<comment type="subcellular location">
    <subcellularLocation>
        <location evidence="1">Secreted</location>
    </subcellularLocation>
</comment>
<comment type="similarity">
    <text evidence="2">Belongs to the gastrin/cholecystokinin family.</text>
</comment>
<name>DSK_DROSE</name>
<gene>
    <name evidence="7" type="primary">Dsk</name>
    <name type="ORF">GM10727</name>
</gene>
<reference evidence="7" key="1">
    <citation type="submission" date="2008-04" db="EMBL/GenBank/DDBJ databases">
        <title>A molecular phylogeny for the Drosophila melanogaster subgroup.</title>
        <authorList>
            <person name="Ke F."/>
        </authorList>
    </citation>
    <scope>NUCLEOTIDE SEQUENCE [GENOMIC DNA]</scope>
</reference>
<reference key="2">
    <citation type="journal article" date="2007" name="Nature">
        <title>Evolution of genes and genomes on the Drosophila phylogeny.</title>
        <authorList>
            <consortium name="Drosophila 12 genomes consortium"/>
        </authorList>
    </citation>
    <scope>NUCLEOTIDE SEQUENCE [LARGE SCALE GENOMIC DNA]</scope>
    <source>
        <strain>Rob3c / Tucson 14021-0248.25</strain>
    </source>
</reference>
<reference evidence="6" key="3">
    <citation type="journal article" date="2007" name="J. Insect Physiol.">
        <title>The drosulfakinin 0 (DSK 0) peptide encoded in the conserved Dsk gene affects adult Drosophila melanogaster crop contractions.</title>
        <authorList>
            <person name="Palmer G.C."/>
            <person name="Tran T."/>
            <person name="Duttlinger A."/>
            <person name="Nichols R."/>
        </authorList>
    </citation>
    <scope>IDENTIFICATION</scope>
    <scope>AMIDATION AT PHE-82 AND PHE-122</scope>
    <scope>SULFATION AT TYR-117</scope>
</reference>
<organism>
    <name type="scientific">Drosophila sechellia</name>
    <name type="common">Fruit fly</name>
    <dbReference type="NCBI Taxonomy" id="7238"/>
    <lineage>
        <taxon>Eukaryota</taxon>
        <taxon>Metazoa</taxon>
        <taxon>Ecdysozoa</taxon>
        <taxon>Arthropoda</taxon>
        <taxon>Hexapoda</taxon>
        <taxon>Insecta</taxon>
        <taxon>Pterygota</taxon>
        <taxon>Neoptera</taxon>
        <taxon>Endopterygota</taxon>
        <taxon>Diptera</taxon>
        <taxon>Brachycera</taxon>
        <taxon>Muscomorpha</taxon>
        <taxon>Ephydroidea</taxon>
        <taxon>Drosophilidae</taxon>
        <taxon>Drosophila</taxon>
        <taxon>Sophophora</taxon>
    </lineage>
</organism>
<accession>B2ZB98</accession>
<sequence length="141" mass="16154">MGLRSCTHLATLFMTLWALAFCFLVVVPIPAQTTSLQNAKDDRRLQELESKIGAESDQPNANLVGPSFSRFGDRRNQKTISFGRRVPLISRPMIPIELDLLMDNDDERTKAKRFDDYGHMRFGKRGGDDQFDDYGHMRFGR</sequence>
<dbReference type="EMBL" id="EU635463">
    <property type="protein sequence ID" value="ACC99372.1"/>
    <property type="molecule type" value="Genomic_DNA"/>
</dbReference>
<dbReference type="EMBL" id="CH480821">
    <property type="protein sequence ID" value="EDW54786.1"/>
    <property type="molecule type" value="Genomic_DNA"/>
</dbReference>
<dbReference type="STRING" id="7238.B2ZB98"/>
<dbReference type="EnsemblMetazoa" id="FBtr0193712">
    <property type="protein sequence ID" value="FBpp0192204"/>
    <property type="gene ID" value="FBgn0165673"/>
</dbReference>
<dbReference type="EnsemblMetazoa" id="XM_002038213.2">
    <property type="protein sequence ID" value="XP_002038249.1"/>
    <property type="gene ID" value="LOC6613779"/>
</dbReference>
<dbReference type="GeneID" id="6613779"/>
<dbReference type="KEGG" id="dse:6613779"/>
<dbReference type="HOGENOM" id="CLU_1847224_0_0_1"/>
<dbReference type="OMA" id="FGDRRNQ"/>
<dbReference type="OrthoDB" id="24375at7215"/>
<dbReference type="PhylomeDB" id="B2ZB98"/>
<dbReference type="Proteomes" id="UP000001292">
    <property type="component" value="Unassembled WGS sequence"/>
</dbReference>
<dbReference type="GO" id="GO:0005576">
    <property type="term" value="C:extracellular region"/>
    <property type="evidence" value="ECO:0007669"/>
    <property type="project" value="UniProtKB-SubCell"/>
</dbReference>
<dbReference type="GO" id="GO:0005184">
    <property type="term" value="F:neuropeptide hormone activity"/>
    <property type="evidence" value="ECO:0007669"/>
    <property type="project" value="EnsemblMetazoa"/>
</dbReference>
<dbReference type="GO" id="GO:0071855">
    <property type="term" value="F:neuropeptide receptor binding"/>
    <property type="evidence" value="ECO:0007669"/>
    <property type="project" value="EnsemblMetazoa"/>
</dbReference>
<dbReference type="GO" id="GO:0008343">
    <property type="term" value="P:adult feeding behavior"/>
    <property type="evidence" value="ECO:0007669"/>
    <property type="project" value="EnsemblMetazoa"/>
</dbReference>
<dbReference type="GO" id="GO:0008344">
    <property type="term" value="P:adult locomotory behavior"/>
    <property type="evidence" value="ECO:0007669"/>
    <property type="project" value="EnsemblMetazoa"/>
</dbReference>
<dbReference type="GO" id="GO:0002121">
    <property type="term" value="P:inter-male aggressive behavior"/>
    <property type="evidence" value="ECO:0007669"/>
    <property type="project" value="EnsemblMetazoa"/>
</dbReference>
<dbReference type="GO" id="GO:0008345">
    <property type="term" value="P:larval locomotory behavior"/>
    <property type="evidence" value="ECO:0007669"/>
    <property type="project" value="EnsemblMetazoa"/>
</dbReference>
<dbReference type="GO" id="GO:0033555">
    <property type="term" value="P:multicellular organismal response to stress"/>
    <property type="evidence" value="ECO:0007669"/>
    <property type="project" value="EnsemblMetazoa"/>
</dbReference>
<dbReference type="GO" id="GO:0007528">
    <property type="term" value="P:neuromuscular junction development"/>
    <property type="evidence" value="ECO:0007669"/>
    <property type="project" value="EnsemblMetazoa"/>
</dbReference>
<dbReference type="GO" id="GO:0007218">
    <property type="term" value="P:neuropeptide signaling pathway"/>
    <property type="evidence" value="ECO:0007669"/>
    <property type="project" value="UniProtKB-KW"/>
</dbReference>
<dbReference type="GO" id="GO:0007204">
    <property type="term" value="P:positive regulation of cytosolic calcium ion concentration"/>
    <property type="evidence" value="ECO:0007669"/>
    <property type="project" value="EnsemblMetazoa"/>
</dbReference>
<dbReference type="GO" id="GO:0006940">
    <property type="term" value="P:regulation of smooth muscle contraction"/>
    <property type="evidence" value="ECO:0007669"/>
    <property type="project" value="EnsemblMetazoa"/>
</dbReference>
<dbReference type="GO" id="GO:0006939">
    <property type="term" value="P:smooth muscle contraction"/>
    <property type="evidence" value="ECO:0000250"/>
    <property type="project" value="UniProtKB"/>
</dbReference>
<dbReference type="InterPro" id="IPR013152">
    <property type="entry name" value="Gastrin/cholecystokinin_CS"/>
</dbReference>
<dbReference type="InterPro" id="IPR013259">
    <property type="entry name" value="Sulfakinin"/>
</dbReference>
<dbReference type="Pfam" id="PF08257">
    <property type="entry name" value="Sulfakinin"/>
    <property type="match status" value="2"/>
</dbReference>
<dbReference type="PROSITE" id="PS00259">
    <property type="entry name" value="GASTRIN"/>
    <property type="match status" value="2"/>
</dbReference>